<feature type="chain" id="PRO_0000416649" description="Uncharacterized protein C25B8.20">
    <location>
        <begin position="1"/>
        <end position="72"/>
    </location>
</feature>
<feature type="coiled-coil region" evidence="1">
    <location>
        <begin position="27"/>
        <end position="55"/>
    </location>
</feature>
<keyword id="KW-0175">Coiled coil</keyword>
<keyword id="KW-1185">Reference proteome</keyword>
<reference key="1">
    <citation type="journal article" date="2002" name="Nature">
        <title>The genome sequence of Schizosaccharomyces pombe.</title>
        <authorList>
            <person name="Wood V."/>
            <person name="Gwilliam R."/>
            <person name="Rajandream M.A."/>
            <person name="Lyne M.H."/>
            <person name="Lyne R."/>
            <person name="Stewart A."/>
            <person name="Sgouros J.G."/>
            <person name="Peat N."/>
            <person name="Hayles J."/>
            <person name="Baker S.G."/>
            <person name="Basham D."/>
            <person name="Bowman S."/>
            <person name="Brooks K."/>
            <person name="Brown D."/>
            <person name="Brown S."/>
            <person name="Chillingworth T."/>
            <person name="Churcher C.M."/>
            <person name="Collins M."/>
            <person name="Connor R."/>
            <person name="Cronin A."/>
            <person name="Davis P."/>
            <person name="Feltwell T."/>
            <person name="Fraser A."/>
            <person name="Gentles S."/>
            <person name="Goble A."/>
            <person name="Hamlin N."/>
            <person name="Harris D.E."/>
            <person name="Hidalgo J."/>
            <person name="Hodgson G."/>
            <person name="Holroyd S."/>
            <person name="Hornsby T."/>
            <person name="Howarth S."/>
            <person name="Huckle E.J."/>
            <person name="Hunt S."/>
            <person name="Jagels K."/>
            <person name="James K.D."/>
            <person name="Jones L."/>
            <person name="Jones M."/>
            <person name="Leather S."/>
            <person name="McDonald S."/>
            <person name="McLean J."/>
            <person name="Mooney P."/>
            <person name="Moule S."/>
            <person name="Mungall K.L."/>
            <person name="Murphy L.D."/>
            <person name="Niblett D."/>
            <person name="Odell C."/>
            <person name="Oliver K."/>
            <person name="O'Neil S."/>
            <person name="Pearson D."/>
            <person name="Quail M.A."/>
            <person name="Rabbinowitsch E."/>
            <person name="Rutherford K.M."/>
            <person name="Rutter S."/>
            <person name="Saunders D."/>
            <person name="Seeger K."/>
            <person name="Sharp S."/>
            <person name="Skelton J."/>
            <person name="Simmonds M.N."/>
            <person name="Squares R."/>
            <person name="Squares S."/>
            <person name="Stevens K."/>
            <person name="Taylor K."/>
            <person name="Taylor R.G."/>
            <person name="Tivey A."/>
            <person name="Walsh S.V."/>
            <person name="Warren T."/>
            <person name="Whitehead S."/>
            <person name="Woodward J.R."/>
            <person name="Volckaert G."/>
            <person name="Aert R."/>
            <person name="Robben J."/>
            <person name="Grymonprez B."/>
            <person name="Weltjens I."/>
            <person name="Vanstreels E."/>
            <person name="Rieger M."/>
            <person name="Schaefer M."/>
            <person name="Mueller-Auer S."/>
            <person name="Gabel C."/>
            <person name="Fuchs M."/>
            <person name="Duesterhoeft A."/>
            <person name="Fritzc C."/>
            <person name="Holzer E."/>
            <person name="Moestl D."/>
            <person name="Hilbert H."/>
            <person name="Borzym K."/>
            <person name="Langer I."/>
            <person name="Beck A."/>
            <person name="Lehrach H."/>
            <person name="Reinhardt R."/>
            <person name="Pohl T.M."/>
            <person name="Eger P."/>
            <person name="Zimmermann W."/>
            <person name="Wedler H."/>
            <person name="Wambutt R."/>
            <person name="Purnelle B."/>
            <person name="Goffeau A."/>
            <person name="Cadieu E."/>
            <person name="Dreano S."/>
            <person name="Gloux S."/>
            <person name="Lelaure V."/>
            <person name="Mottier S."/>
            <person name="Galibert F."/>
            <person name="Aves S.J."/>
            <person name="Xiang Z."/>
            <person name="Hunt C."/>
            <person name="Moore K."/>
            <person name="Hurst S.M."/>
            <person name="Lucas M."/>
            <person name="Rochet M."/>
            <person name="Gaillardin C."/>
            <person name="Tallada V.A."/>
            <person name="Garzon A."/>
            <person name="Thode G."/>
            <person name="Daga R.R."/>
            <person name="Cruzado L."/>
            <person name="Jimenez J."/>
            <person name="Sanchez M."/>
            <person name="del Rey F."/>
            <person name="Benito J."/>
            <person name="Dominguez A."/>
            <person name="Revuelta J.L."/>
            <person name="Moreno S."/>
            <person name="Armstrong J."/>
            <person name="Forsburg S.L."/>
            <person name="Cerutti L."/>
            <person name="Lowe T."/>
            <person name="McCombie W.R."/>
            <person name="Paulsen I."/>
            <person name="Potashkin J."/>
            <person name="Shpakovski G.V."/>
            <person name="Ussery D."/>
            <person name="Barrell B.G."/>
            <person name="Nurse P."/>
        </authorList>
    </citation>
    <scope>NUCLEOTIDE SEQUENCE [LARGE SCALE GENOMIC DNA]</scope>
    <source>
        <strain>972 / ATCC 24843</strain>
    </source>
</reference>
<reference key="2">
    <citation type="journal article" date="2011" name="Science">
        <title>Comparative functional genomics of the fission yeasts.</title>
        <authorList>
            <person name="Rhind N."/>
            <person name="Chen Z."/>
            <person name="Yassour M."/>
            <person name="Thompson D.A."/>
            <person name="Haas B.J."/>
            <person name="Habib N."/>
            <person name="Wapinski I."/>
            <person name="Roy S."/>
            <person name="Lin M.F."/>
            <person name="Heiman D.I."/>
            <person name="Young S.K."/>
            <person name="Furuya K."/>
            <person name="Guo Y."/>
            <person name="Pidoux A."/>
            <person name="Chen H.M."/>
            <person name="Robbertse B."/>
            <person name="Goldberg J.M."/>
            <person name="Aoki K."/>
            <person name="Bayne E.H."/>
            <person name="Berlin A.M."/>
            <person name="Desjardins C.A."/>
            <person name="Dobbs E."/>
            <person name="Dukaj L."/>
            <person name="Fan L."/>
            <person name="FitzGerald M.G."/>
            <person name="French C."/>
            <person name="Gujja S."/>
            <person name="Hansen K."/>
            <person name="Keifenheim D."/>
            <person name="Levin J.Z."/>
            <person name="Mosher R.A."/>
            <person name="Mueller C.A."/>
            <person name="Pfiffner J."/>
            <person name="Priest M."/>
            <person name="Russ C."/>
            <person name="Smialowska A."/>
            <person name="Swoboda P."/>
            <person name="Sykes S.M."/>
            <person name="Vaughn M."/>
            <person name="Vengrova S."/>
            <person name="Yoder R."/>
            <person name="Zeng Q."/>
            <person name="Allshire R."/>
            <person name="Baulcombe D."/>
            <person name="Birren B.W."/>
            <person name="Brown W."/>
            <person name="Ekwall K."/>
            <person name="Kellis M."/>
            <person name="Leatherwood J."/>
            <person name="Levin H."/>
            <person name="Margalit H."/>
            <person name="Martienssen R."/>
            <person name="Nieduszynski C.A."/>
            <person name="Spatafora J.W."/>
            <person name="Friedman N."/>
            <person name="Dalgaard J.Z."/>
            <person name="Baumann P."/>
            <person name="Niki H."/>
            <person name="Regev A."/>
            <person name="Nusbaum C."/>
        </authorList>
    </citation>
    <scope>IDENTIFICATION</scope>
</reference>
<accession>G2TRN5</accession>
<name>YL8K_SCHPO</name>
<evidence type="ECO:0000255" key="1"/>
<dbReference type="EMBL" id="CU329670">
    <property type="protein sequence ID" value="CCD31337.1"/>
    <property type="molecule type" value="Genomic_DNA"/>
</dbReference>
<dbReference type="RefSeq" id="XP_004001792.1">
    <property type="nucleotide sequence ID" value="XM_004001743.1"/>
</dbReference>
<dbReference type="SMR" id="G2TRN5"/>
<dbReference type="STRING" id="284812.G2TRN5"/>
<dbReference type="PaxDb" id="4896-SPAC25B8.20.1"/>
<dbReference type="EnsemblFungi" id="SPAC25B8.20.1">
    <property type="protein sequence ID" value="SPAC25B8.20.1:pep"/>
    <property type="gene ID" value="SPAC25B8.20"/>
</dbReference>
<dbReference type="PomBase" id="SPAC25B8.20"/>
<dbReference type="VEuPathDB" id="FungiDB:SPAC25B8.20"/>
<dbReference type="HOGENOM" id="CLU_2723636_0_0_1"/>
<dbReference type="InParanoid" id="G2TRN5"/>
<dbReference type="PRO" id="PR:G2TRN5"/>
<dbReference type="Proteomes" id="UP000002485">
    <property type="component" value="Chromosome I"/>
</dbReference>
<gene>
    <name type="ORF">SPAC25B8.20</name>
</gene>
<protein>
    <recommendedName>
        <fullName>Uncharacterized protein C25B8.20</fullName>
    </recommendedName>
</protein>
<proteinExistence type="predicted"/>
<sequence>MSPRASLEKELNSARLLHATINAMDVYTQNLINELQEARDSINDLQRAHERLKLVGAKAKLQIKRDEKKPKS</sequence>
<organism>
    <name type="scientific">Schizosaccharomyces pombe (strain 972 / ATCC 24843)</name>
    <name type="common">Fission yeast</name>
    <dbReference type="NCBI Taxonomy" id="284812"/>
    <lineage>
        <taxon>Eukaryota</taxon>
        <taxon>Fungi</taxon>
        <taxon>Dikarya</taxon>
        <taxon>Ascomycota</taxon>
        <taxon>Taphrinomycotina</taxon>
        <taxon>Schizosaccharomycetes</taxon>
        <taxon>Schizosaccharomycetales</taxon>
        <taxon>Schizosaccharomycetaceae</taxon>
        <taxon>Schizosaccharomyces</taxon>
    </lineage>
</organism>